<keyword id="KW-0997">Cell inner membrane</keyword>
<keyword id="KW-1003">Cell membrane</keyword>
<keyword id="KW-0963">Cytoplasm</keyword>
<keyword id="KW-0342">GTP-binding</keyword>
<keyword id="KW-0472">Membrane</keyword>
<keyword id="KW-0547">Nucleotide-binding</keyword>
<keyword id="KW-0690">Ribosome biogenesis</keyword>
<keyword id="KW-0694">RNA-binding</keyword>
<keyword id="KW-0699">rRNA-binding</keyword>
<gene>
    <name evidence="1" type="primary">era</name>
    <name type="ordered locus">SBO_2594</name>
</gene>
<organism>
    <name type="scientific">Shigella boydii serotype 4 (strain Sb227)</name>
    <dbReference type="NCBI Taxonomy" id="300268"/>
    <lineage>
        <taxon>Bacteria</taxon>
        <taxon>Pseudomonadati</taxon>
        <taxon>Pseudomonadota</taxon>
        <taxon>Gammaproteobacteria</taxon>
        <taxon>Enterobacterales</taxon>
        <taxon>Enterobacteriaceae</taxon>
        <taxon>Shigella</taxon>
    </lineage>
</organism>
<comment type="function">
    <text evidence="1">An essential GTPase that binds both GDP and GTP, with rapid nucleotide exchange. Plays a role in 16S rRNA processing and 30S ribosomal subunit biogenesis and possibly also in cell cycle regulation and energy metabolism.</text>
</comment>
<comment type="subunit">
    <text evidence="1">Monomer.</text>
</comment>
<comment type="subcellular location">
    <subcellularLocation>
        <location>Cytoplasm</location>
    </subcellularLocation>
    <subcellularLocation>
        <location evidence="1">Cell inner membrane</location>
        <topology evidence="1">Peripheral membrane protein</topology>
    </subcellularLocation>
</comment>
<comment type="similarity">
    <text evidence="1 2">Belongs to the TRAFAC class TrmE-Era-EngA-EngB-Septin-like GTPase superfamily. Era GTPase family.</text>
</comment>
<reference key="1">
    <citation type="journal article" date="2005" name="Nucleic Acids Res.">
        <title>Genome dynamics and diversity of Shigella species, the etiologic agents of bacillary dysentery.</title>
        <authorList>
            <person name="Yang F."/>
            <person name="Yang J."/>
            <person name="Zhang X."/>
            <person name="Chen L."/>
            <person name="Jiang Y."/>
            <person name="Yan Y."/>
            <person name="Tang X."/>
            <person name="Wang J."/>
            <person name="Xiong Z."/>
            <person name="Dong J."/>
            <person name="Xue Y."/>
            <person name="Zhu Y."/>
            <person name="Xu X."/>
            <person name="Sun L."/>
            <person name="Chen S."/>
            <person name="Nie H."/>
            <person name="Peng J."/>
            <person name="Xu J."/>
            <person name="Wang Y."/>
            <person name="Yuan Z."/>
            <person name="Wen Y."/>
            <person name="Yao Z."/>
            <person name="Shen Y."/>
            <person name="Qiang B."/>
            <person name="Hou Y."/>
            <person name="Yu J."/>
            <person name="Jin Q."/>
        </authorList>
    </citation>
    <scope>NUCLEOTIDE SEQUENCE [LARGE SCALE GENOMIC DNA]</scope>
    <source>
        <strain>Sb227</strain>
    </source>
</reference>
<sequence>MSIDKSYCGFIAIVGRPNVGKSTLLNKLLGQKISITSRKAQTTRHRIVGIHTEGAYQAIYVDTPGLHMEEKRAINRLMNKAASSSIGDVELVIFVVEGTRWTPDDEMVLNKLRDGKAPVILAVNKVDNVQEKADLLPHLQFLASQMNFLDIVPISAETGLNVDTIAAIVRKHLPEATHHFPEDYITDRSQRFMASEIIREKLMRFLGAELPYSVTVEIERFVSNERGGYDINGLILVEREGQKKMVIGNKGAKIKTIGIEARKDMQEMFEAPVHLELWVKVKSGWADDERALRSLGYVDDL</sequence>
<name>ERA_SHIBS</name>
<feature type="chain" id="PRO_1000079734" description="GTPase Era">
    <location>
        <begin position="1"/>
        <end position="301"/>
    </location>
</feature>
<feature type="domain" description="Era-type G" evidence="2">
    <location>
        <begin position="7"/>
        <end position="175"/>
    </location>
</feature>
<feature type="domain" description="KH type-2" evidence="1">
    <location>
        <begin position="206"/>
        <end position="283"/>
    </location>
</feature>
<feature type="region of interest" description="G1" evidence="2">
    <location>
        <begin position="15"/>
        <end position="22"/>
    </location>
</feature>
<feature type="region of interest" description="G2" evidence="2">
    <location>
        <begin position="41"/>
        <end position="45"/>
    </location>
</feature>
<feature type="region of interest" description="G3" evidence="2">
    <location>
        <begin position="62"/>
        <end position="65"/>
    </location>
</feature>
<feature type="region of interest" description="G4" evidence="2">
    <location>
        <begin position="124"/>
        <end position="127"/>
    </location>
</feature>
<feature type="region of interest" description="G5" evidence="2">
    <location>
        <begin position="154"/>
        <end position="156"/>
    </location>
</feature>
<feature type="binding site" evidence="1">
    <location>
        <begin position="15"/>
        <end position="22"/>
    </location>
    <ligand>
        <name>GTP</name>
        <dbReference type="ChEBI" id="CHEBI:37565"/>
    </ligand>
</feature>
<feature type="binding site" evidence="1">
    <location>
        <begin position="62"/>
        <end position="66"/>
    </location>
    <ligand>
        <name>GTP</name>
        <dbReference type="ChEBI" id="CHEBI:37565"/>
    </ligand>
</feature>
<feature type="binding site" evidence="1">
    <location>
        <begin position="124"/>
        <end position="127"/>
    </location>
    <ligand>
        <name>GTP</name>
        <dbReference type="ChEBI" id="CHEBI:37565"/>
    </ligand>
</feature>
<proteinExistence type="inferred from homology"/>
<accession>Q31XS1</accession>
<dbReference type="EMBL" id="CP000036">
    <property type="protein sequence ID" value="ABB67137.1"/>
    <property type="molecule type" value="Genomic_DNA"/>
</dbReference>
<dbReference type="RefSeq" id="WP_000020737.1">
    <property type="nucleotide sequence ID" value="NC_007613.1"/>
</dbReference>
<dbReference type="SMR" id="Q31XS1"/>
<dbReference type="GeneID" id="93774525"/>
<dbReference type="KEGG" id="sbo:SBO_2594"/>
<dbReference type="HOGENOM" id="CLU_038009_1_2_6"/>
<dbReference type="Proteomes" id="UP000007067">
    <property type="component" value="Chromosome"/>
</dbReference>
<dbReference type="GO" id="GO:0005829">
    <property type="term" value="C:cytosol"/>
    <property type="evidence" value="ECO:0007669"/>
    <property type="project" value="TreeGrafter"/>
</dbReference>
<dbReference type="GO" id="GO:0005886">
    <property type="term" value="C:plasma membrane"/>
    <property type="evidence" value="ECO:0007669"/>
    <property type="project" value="UniProtKB-SubCell"/>
</dbReference>
<dbReference type="GO" id="GO:0005525">
    <property type="term" value="F:GTP binding"/>
    <property type="evidence" value="ECO:0007669"/>
    <property type="project" value="UniProtKB-UniRule"/>
</dbReference>
<dbReference type="GO" id="GO:0003924">
    <property type="term" value="F:GTPase activity"/>
    <property type="evidence" value="ECO:0007669"/>
    <property type="project" value="UniProtKB-UniRule"/>
</dbReference>
<dbReference type="GO" id="GO:0043024">
    <property type="term" value="F:ribosomal small subunit binding"/>
    <property type="evidence" value="ECO:0007669"/>
    <property type="project" value="TreeGrafter"/>
</dbReference>
<dbReference type="GO" id="GO:0070181">
    <property type="term" value="F:small ribosomal subunit rRNA binding"/>
    <property type="evidence" value="ECO:0007669"/>
    <property type="project" value="UniProtKB-UniRule"/>
</dbReference>
<dbReference type="GO" id="GO:0000028">
    <property type="term" value="P:ribosomal small subunit assembly"/>
    <property type="evidence" value="ECO:0007669"/>
    <property type="project" value="TreeGrafter"/>
</dbReference>
<dbReference type="CDD" id="cd04163">
    <property type="entry name" value="Era"/>
    <property type="match status" value="1"/>
</dbReference>
<dbReference type="CDD" id="cd22534">
    <property type="entry name" value="KH-II_Era"/>
    <property type="match status" value="1"/>
</dbReference>
<dbReference type="FunFam" id="3.30.300.20:FF:000003">
    <property type="entry name" value="GTPase Era"/>
    <property type="match status" value="1"/>
</dbReference>
<dbReference type="FunFam" id="3.40.50.300:FF:000094">
    <property type="entry name" value="GTPase Era"/>
    <property type="match status" value="1"/>
</dbReference>
<dbReference type="Gene3D" id="3.30.300.20">
    <property type="match status" value="1"/>
</dbReference>
<dbReference type="Gene3D" id="3.40.50.300">
    <property type="entry name" value="P-loop containing nucleotide triphosphate hydrolases"/>
    <property type="match status" value="1"/>
</dbReference>
<dbReference type="HAMAP" id="MF_00367">
    <property type="entry name" value="GTPase_Era"/>
    <property type="match status" value="1"/>
</dbReference>
<dbReference type="InterPro" id="IPR030388">
    <property type="entry name" value="G_ERA_dom"/>
</dbReference>
<dbReference type="InterPro" id="IPR006073">
    <property type="entry name" value="GTP-bd"/>
</dbReference>
<dbReference type="InterPro" id="IPR005662">
    <property type="entry name" value="GTPase_Era-like"/>
</dbReference>
<dbReference type="InterPro" id="IPR015946">
    <property type="entry name" value="KH_dom-like_a/b"/>
</dbReference>
<dbReference type="InterPro" id="IPR004044">
    <property type="entry name" value="KH_dom_type_2"/>
</dbReference>
<dbReference type="InterPro" id="IPR009019">
    <property type="entry name" value="KH_sf_prok-type"/>
</dbReference>
<dbReference type="InterPro" id="IPR027417">
    <property type="entry name" value="P-loop_NTPase"/>
</dbReference>
<dbReference type="InterPro" id="IPR005225">
    <property type="entry name" value="Small_GTP-bd"/>
</dbReference>
<dbReference type="NCBIfam" id="TIGR00436">
    <property type="entry name" value="era"/>
    <property type="match status" value="1"/>
</dbReference>
<dbReference type="NCBIfam" id="NF000908">
    <property type="entry name" value="PRK00089.1"/>
    <property type="match status" value="1"/>
</dbReference>
<dbReference type="NCBIfam" id="TIGR00231">
    <property type="entry name" value="small_GTP"/>
    <property type="match status" value="1"/>
</dbReference>
<dbReference type="PANTHER" id="PTHR42698">
    <property type="entry name" value="GTPASE ERA"/>
    <property type="match status" value="1"/>
</dbReference>
<dbReference type="PANTHER" id="PTHR42698:SF1">
    <property type="entry name" value="GTPASE ERA, MITOCHONDRIAL"/>
    <property type="match status" value="1"/>
</dbReference>
<dbReference type="Pfam" id="PF07650">
    <property type="entry name" value="KH_2"/>
    <property type="match status" value="1"/>
</dbReference>
<dbReference type="Pfam" id="PF01926">
    <property type="entry name" value="MMR_HSR1"/>
    <property type="match status" value="1"/>
</dbReference>
<dbReference type="SUPFAM" id="SSF52540">
    <property type="entry name" value="P-loop containing nucleoside triphosphate hydrolases"/>
    <property type="match status" value="1"/>
</dbReference>
<dbReference type="SUPFAM" id="SSF54814">
    <property type="entry name" value="Prokaryotic type KH domain (KH-domain type II)"/>
    <property type="match status" value="1"/>
</dbReference>
<dbReference type="PROSITE" id="PS51713">
    <property type="entry name" value="G_ERA"/>
    <property type="match status" value="1"/>
</dbReference>
<dbReference type="PROSITE" id="PS50823">
    <property type="entry name" value="KH_TYPE_2"/>
    <property type="match status" value="1"/>
</dbReference>
<protein>
    <recommendedName>
        <fullName evidence="1">GTPase Era</fullName>
    </recommendedName>
</protein>
<evidence type="ECO:0000255" key="1">
    <source>
        <dbReference type="HAMAP-Rule" id="MF_00367"/>
    </source>
</evidence>
<evidence type="ECO:0000255" key="2">
    <source>
        <dbReference type="PROSITE-ProRule" id="PRU01050"/>
    </source>
</evidence>